<accession>B6JB67</accession>
<accession>F8BV35</accession>
<comment type="function">
    <text evidence="1">Catalyzes the reductive methylation of 2'-deoxyuridine-5'-monophosphate (dUMP) to 2'-deoxythymidine-5'-monophosphate (dTMP) while utilizing 5,10-methylenetetrahydrofolate (mTHF) as the methyl donor and reductant in the reaction, yielding dihydrofolate (DHF) as a by-product. This enzymatic reaction provides an intracellular de novo source of dTMP, an essential precursor for DNA biosynthesis.</text>
</comment>
<comment type="catalytic activity">
    <reaction evidence="1">
        <text>dUMP + (6R)-5,10-methylene-5,6,7,8-tetrahydrofolate = 7,8-dihydrofolate + dTMP</text>
        <dbReference type="Rhea" id="RHEA:12104"/>
        <dbReference type="ChEBI" id="CHEBI:15636"/>
        <dbReference type="ChEBI" id="CHEBI:57451"/>
        <dbReference type="ChEBI" id="CHEBI:63528"/>
        <dbReference type="ChEBI" id="CHEBI:246422"/>
        <dbReference type="EC" id="2.1.1.45"/>
    </reaction>
</comment>
<comment type="pathway">
    <text evidence="1">Pyrimidine metabolism; dTTP biosynthesis.</text>
</comment>
<comment type="subunit">
    <text evidence="1">Homodimer.</text>
</comment>
<comment type="subcellular location">
    <subcellularLocation>
        <location evidence="1">Cytoplasm</location>
    </subcellularLocation>
</comment>
<comment type="similarity">
    <text evidence="1">Belongs to the thymidylate synthase family. Bacterial-type ThyA subfamily.</text>
</comment>
<sequence length="264" mass="30062">MHQYQDLLEHILSDGAEKHDRTGTGTLSVFGHQMRFDLAAGFPMLTTKKLPFKAIVHELLWFLAGDTNVRYLQNNGVSIWDEWADANGDLGPVYGKQWRSWQAPDGRSIDQITNLVQMIRTNPDSRRLIVTAWNPADVEQMALPPCHCLFQFYVANGRLSCQLYQRSADVFLGVPFNIASYALLMMMIAQVTDLAPGHFVHTFGDAHLYSNHLDQARLQLTRAPRALPTLRINPAVRDIFGFRYEDFKLENYDPHPHIKAEVAV</sequence>
<reference key="1">
    <citation type="journal article" date="2008" name="J. Bacteriol.">
        <title>Genome sequence of the chemolithoautotrophic bacterium Oligotropha carboxidovorans OM5T.</title>
        <authorList>
            <person name="Paul D."/>
            <person name="Bridges S."/>
            <person name="Burgess S.C."/>
            <person name="Dandass Y."/>
            <person name="Lawrence M.L."/>
        </authorList>
    </citation>
    <scope>NUCLEOTIDE SEQUENCE [LARGE SCALE GENOMIC DNA]</scope>
    <source>
        <strain>ATCC 49405 / DSM 1227 / KCTC 32145 / OM5</strain>
    </source>
</reference>
<reference key="2">
    <citation type="journal article" date="2011" name="J. Bacteriol.">
        <title>Complete genome sequences of the chemolithoautotrophic Oligotropha carboxidovorans strains OM4 and OM5.</title>
        <authorList>
            <person name="Volland S."/>
            <person name="Rachinger M."/>
            <person name="Strittmatter A."/>
            <person name="Daniel R."/>
            <person name="Gottschalk G."/>
            <person name="Meyer O."/>
        </authorList>
    </citation>
    <scope>NUCLEOTIDE SEQUENCE [LARGE SCALE GENOMIC DNA]</scope>
    <source>
        <strain>ATCC 49405 / DSM 1227 / KCTC 32145 / OM5</strain>
    </source>
</reference>
<gene>
    <name evidence="1" type="primary">thyA</name>
    <name type="ordered locus">OCAR_5276</name>
    <name type="ordered locus">OCA5_c26960</name>
</gene>
<evidence type="ECO:0000255" key="1">
    <source>
        <dbReference type="HAMAP-Rule" id="MF_00008"/>
    </source>
</evidence>
<keyword id="KW-0963">Cytoplasm</keyword>
<keyword id="KW-0489">Methyltransferase</keyword>
<keyword id="KW-0545">Nucleotide biosynthesis</keyword>
<keyword id="KW-1185">Reference proteome</keyword>
<keyword id="KW-0808">Transferase</keyword>
<feature type="chain" id="PRO_1000089140" description="Thymidylate synthase">
    <location>
        <begin position="1"/>
        <end position="264"/>
    </location>
</feature>
<feature type="active site" description="Nucleophile" evidence="1">
    <location>
        <position position="146"/>
    </location>
</feature>
<feature type="binding site" description="in other chain" evidence="1">
    <location>
        <position position="21"/>
    </location>
    <ligand>
        <name>dUMP</name>
        <dbReference type="ChEBI" id="CHEBI:246422"/>
        <note>ligand shared between dimeric partners</note>
    </ligand>
</feature>
<feature type="binding site" evidence="1">
    <location>
        <begin position="126"/>
        <end position="127"/>
    </location>
    <ligand>
        <name>dUMP</name>
        <dbReference type="ChEBI" id="CHEBI:246422"/>
        <note>ligand shared between dimeric partners</note>
    </ligand>
</feature>
<feature type="binding site" description="in other chain" evidence="1">
    <location>
        <begin position="166"/>
        <end position="169"/>
    </location>
    <ligand>
        <name>dUMP</name>
        <dbReference type="ChEBI" id="CHEBI:246422"/>
        <note>ligand shared between dimeric partners</note>
    </ligand>
</feature>
<feature type="binding site" evidence="1">
    <location>
        <position position="169"/>
    </location>
    <ligand>
        <name>(6R)-5,10-methylene-5,6,7,8-tetrahydrofolate</name>
        <dbReference type="ChEBI" id="CHEBI:15636"/>
    </ligand>
</feature>
<feature type="binding site" description="in other chain" evidence="1">
    <location>
        <position position="177"/>
    </location>
    <ligand>
        <name>dUMP</name>
        <dbReference type="ChEBI" id="CHEBI:246422"/>
        <note>ligand shared between dimeric partners</note>
    </ligand>
</feature>
<feature type="binding site" description="in other chain" evidence="1">
    <location>
        <begin position="207"/>
        <end position="209"/>
    </location>
    <ligand>
        <name>dUMP</name>
        <dbReference type="ChEBI" id="CHEBI:246422"/>
        <note>ligand shared between dimeric partners</note>
    </ligand>
</feature>
<feature type="binding site" evidence="1">
    <location>
        <position position="263"/>
    </location>
    <ligand>
        <name>(6R)-5,10-methylene-5,6,7,8-tetrahydrofolate</name>
        <dbReference type="ChEBI" id="CHEBI:15636"/>
    </ligand>
</feature>
<dbReference type="EC" id="2.1.1.45" evidence="1"/>
<dbReference type="EMBL" id="CP001196">
    <property type="protein sequence ID" value="ACI92408.1"/>
    <property type="molecule type" value="Genomic_DNA"/>
</dbReference>
<dbReference type="EMBL" id="CP002826">
    <property type="protein sequence ID" value="AEI07390.1"/>
    <property type="molecule type" value="Genomic_DNA"/>
</dbReference>
<dbReference type="RefSeq" id="WP_012562437.1">
    <property type="nucleotide sequence ID" value="NC_015684.1"/>
</dbReference>
<dbReference type="SMR" id="B6JB67"/>
<dbReference type="STRING" id="504832.OCA5_c26960"/>
<dbReference type="KEGG" id="oca:OCAR_5276"/>
<dbReference type="KEGG" id="ocg:OCA5_c26960"/>
<dbReference type="PATRIC" id="fig|504832.7.peg.2850"/>
<dbReference type="eggNOG" id="COG0207">
    <property type="taxonomic scope" value="Bacteria"/>
</dbReference>
<dbReference type="HOGENOM" id="CLU_021669_0_0_5"/>
<dbReference type="OrthoDB" id="9774633at2"/>
<dbReference type="UniPathway" id="UPA00575"/>
<dbReference type="Proteomes" id="UP000007730">
    <property type="component" value="Chromosome"/>
</dbReference>
<dbReference type="GO" id="GO:0005829">
    <property type="term" value="C:cytosol"/>
    <property type="evidence" value="ECO:0007669"/>
    <property type="project" value="TreeGrafter"/>
</dbReference>
<dbReference type="GO" id="GO:0004799">
    <property type="term" value="F:thymidylate synthase activity"/>
    <property type="evidence" value="ECO:0007669"/>
    <property type="project" value="UniProtKB-UniRule"/>
</dbReference>
<dbReference type="GO" id="GO:0006231">
    <property type="term" value="P:dTMP biosynthetic process"/>
    <property type="evidence" value="ECO:0007669"/>
    <property type="project" value="UniProtKB-UniRule"/>
</dbReference>
<dbReference type="GO" id="GO:0006235">
    <property type="term" value="P:dTTP biosynthetic process"/>
    <property type="evidence" value="ECO:0007669"/>
    <property type="project" value="UniProtKB-UniRule"/>
</dbReference>
<dbReference type="GO" id="GO:0032259">
    <property type="term" value="P:methylation"/>
    <property type="evidence" value="ECO:0007669"/>
    <property type="project" value="UniProtKB-KW"/>
</dbReference>
<dbReference type="CDD" id="cd00351">
    <property type="entry name" value="TS_Pyrimidine_HMase"/>
    <property type="match status" value="1"/>
</dbReference>
<dbReference type="FunFam" id="3.30.572.10:FF:000001">
    <property type="entry name" value="Thymidylate synthase"/>
    <property type="match status" value="1"/>
</dbReference>
<dbReference type="Gene3D" id="3.30.572.10">
    <property type="entry name" value="Thymidylate synthase/dCMP hydroxymethylase domain"/>
    <property type="match status" value="1"/>
</dbReference>
<dbReference type="HAMAP" id="MF_00008">
    <property type="entry name" value="Thymidy_synth_bact"/>
    <property type="match status" value="1"/>
</dbReference>
<dbReference type="InterPro" id="IPR045097">
    <property type="entry name" value="Thymidate_synth/dCMP_Mease"/>
</dbReference>
<dbReference type="InterPro" id="IPR023451">
    <property type="entry name" value="Thymidate_synth/dCMP_Mease_dom"/>
</dbReference>
<dbReference type="InterPro" id="IPR036926">
    <property type="entry name" value="Thymidate_synth/dCMP_Mease_sf"/>
</dbReference>
<dbReference type="InterPro" id="IPR000398">
    <property type="entry name" value="Thymidylate_synthase"/>
</dbReference>
<dbReference type="InterPro" id="IPR020940">
    <property type="entry name" value="Thymidylate_synthase_AS"/>
</dbReference>
<dbReference type="NCBIfam" id="NF002497">
    <property type="entry name" value="PRK01827.1-3"/>
    <property type="match status" value="1"/>
</dbReference>
<dbReference type="NCBIfam" id="NF002499">
    <property type="entry name" value="PRK01827.1-5"/>
    <property type="match status" value="1"/>
</dbReference>
<dbReference type="NCBIfam" id="TIGR03284">
    <property type="entry name" value="thym_sym"/>
    <property type="match status" value="2"/>
</dbReference>
<dbReference type="PANTHER" id="PTHR11548:SF9">
    <property type="entry name" value="THYMIDYLATE SYNTHASE"/>
    <property type="match status" value="1"/>
</dbReference>
<dbReference type="PANTHER" id="PTHR11548">
    <property type="entry name" value="THYMIDYLATE SYNTHASE 1"/>
    <property type="match status" value="1"/>
</dbReference>
<dbReference type="Pfam" id="PF00303">
    <property type="entry name" value="Thymidylat_synt"/>
    <property type="match status" value="1"/>
</dbReference>
<dbReference type="PRINTS" id="PR00108">
    <property type="entry name" value="THYMDSNTHASE"/>
</dbReference>
<dbReference type="SUPFAM" id="SSF55831">
    <property type="entry name" value="Thymidylate synthase/dCMP hydroxymethylase"/>
    <property type="match status" value="1"/>
</dbReference>
<dbReference type="PROSITE" id="PS00091">
    <property type="entry name" value="THYMIDYLATE_SYNTHASE"/>
    <property type="match status" value="1"/>
</dbReference>
<protein>
    <recommendedName>
        <fullName evidence="1">Thymidylate synthase</fullName>
        <shortName evidence="1">TS</shortName>
        <shortName evidence="1">TSase</shortName>
        <ecNumber evidence="1">2.1.1.45</ecNumber>
    </recommendedName>
</protein>
<organism>
    <name type="scientific">Afipia carboxidovorans (strain ATCC 49405 / DSM 1227 / KCTC 32145 / OM5)</name>
    <name type="common">Oligotropha carboxidovorans</name>
    <dbReference type="NCBI Taxonomy" id="504832"/>
    <lineage>
        <taxon>Bacteria</taxon>
        <taxon>Pseudomonadati</taxon>
        <taxon>Pseudomonadota</taxon>
        <taxon>Alphaproteobacteria</taxon>
        <taxon>Hyphomicrobiales</taxon>
        <taxon>Nitrobacteraceae</taxon>
        <taxon>Afipia</taxon>
    </lineage>
</organism>
<name>TYSY_AFIC5</name>
<proteinExistence type="inferred from homology"/>